<accession>Q58231</accession>
<evidence type="ECO:0000305" key="1"/>
<feature type="chain" id="PRO_0000184683" description="Putative uncharacterized protein MJ0821">
    <location>
        <begin position="1"/>
        <end position="56"/>
    </location>
</feature>
<gene>
    <name type="ordered locus">MJ0821</name>
</gene>
<comment type="similarity">
    <text evidence="1">Belongs to the archaeal ATPase family.</text>
</comment>
<comment type="caution">
    <text evidence="1">Could be the product of a pseudogene. MJ0821, MJ0820 and MJ0819 respectively represent the N-terminal, central and C-terminal sections of other members of this family.</text>
</comment>
<dbReference type="EMBL" id="L77117">
    <property type="protein sequence ID" value="AAB98833.1"/>
    <property type="molecule type" value="Genomic_DNA"/>
</dbReference>
<dbReference type="PIR" id="E64402">
    <property type="entry name" value="E64402"/>
</dbReference>
<dbReference type="RefSeq" id="WP_010870332.1">
    <property type="nucleotide sequence ID" value="NC_000909.1"/>
</dbReference>
<dbReference type="STRING" id="243232.MJ_0821"/>
<dbReference type="PaxDb" id="243232-MJ_0821"/>
<dbReference type="EnsemblBacteria" id="AAB98833">
    <property type="protein sequence ID" value="AAB98833"/>
    <property type="gene ID" value="MJ_0821"/>
</dbReference>
<dbReference type="GeneID" id="95970028"/>
<dbReference type="KEGG" id="mja:MJ_0821"/>
<dbReference type="eggNOG" id="arCOG03407">
    <property type="taxonomic scope" value="Archaea"/>
</dbReference>
<dbReference type="HOGENOM" id="CLU_3003150_0_0_2"/>
<dbReference type="InParanoid" id="Q58231"/>
<dbReference type="Proteomes" id="UP000000805">
    <property type="component" value="Chromosome"/>
</dbReference>
<dbReference type="GO" id="GO:0005524">
    <property type="term" value="F:ATP binding"/>
    <property type="evidence" value="ECO:0007669"/>
    <property type="project" value="InterPro"/>
</dbReference>
<dbReference type="InterPro" id="IPR011579">
    <property type="entry name" value="ATPase_dom"/>
</dbReference>
<dbReference type="Pfam" id="PF01637">
    <property type="entry name" value="ATPase_2"/>
    <property type="match status" value="1"/>
</dbReference>
<organism>
    <name type="scientific">Methanocaldococcus jannaschii (strain ATCC 43067 / DSM 2661 / JAL-1 / JCM 10045 / NBRC 100440)</name>
    <name type="common">Methanococcus jannaschii</name>
    <dbReference type="NCBI Taxonomy" id="243232"/>
    <lineage>
        <taxon>Archaea</taxon>
        <taxon>Methanobacteriati</taxon>
        <taxon>Methanobacteriota</taxon>
        <taxon>Methanomada group</taxon>
        <taxon>Methanococci</taxon>
        <taxon>Methanococcales</taxon>
        <taxon>Methanocaldococcaceae</taxon>
        <taxon>Methanocaldococcus</taxon>
    </lineage>
</organism>
<name>Y821_METJA</name>
<protein>
    <recommendedName>
        <fullName>Putative uncharacterized protein MJ0821</fullName>
    </recommendedName>
</protein>
<sequence>MKFFNREKEINKILSIIEGEPNLIYFIYGSLNSGKFNLTEETQFIYSIVVTDGLFS</sequence>
<reference key="1">
    <citation type="journal article" date="1996" name="Science">
        <title>Complete genome sequence of the methanogenic archaeon, Methanococcus jannaschii.</title>
        <authorList>
            <person name="Bult C.J."/>
            <person name="White O."/>
            <person name="Olsen G.J."/>
            <person name="Zhou L."/>
            <person name="Fleischmann R.D."/>
            <person name="Sutton G.G."/>
            <person name="Blake J.A."/>
            <person name="FitzGerald L.M."/>
            <person name="Clayton R.A."/>
            <person name="Gocayne J.D."/>
            <person name="Kerlavage A.R."/>
            <person name="Dougherty B.A."/>
            <person name="Tomb J.-F."/>
            <person name="Adams M.D."/>
            <person name="Reich C.I."/>
            <person name="Overbeek R."/>
            <person name="Kirkness E.F."/>
            <person name="Weinstock K.G."/>
            <person name="Merrick J.M."/>
            <person name="Glodek A."/>
            <person name="Scott J.L."/>
            <person name="Geoghagen N.S.M."/>
            <person name="Weidman J.F."/>
            <person name="Fuhrmann J.L."/>
            <person name="Nguyen D."/>
            <person name="Utterback T.R."/>
            <person name="Kelley J.M."/>
            <person name="Peterson J.D."/>
            <person name="Sadow P.W."/>
            <person name="Hanna M.C."/>
            <person name="Cotton M.D."/>
            <person name="Roberts K.M."/>
            <person name="Hurst M.A."/>
            <person name="Kaine B.P."/>
            <person name="Borodovsky M."/>
            <person name="Klenk H.-P."/>
            <person name="Fraser C.M."/>
            <person name="Smith H.O."/>
            <person name="Woese C.R."/>
            <person name="Venter J.C."/>
        </authorList>
    </citation>
    <scope>NUCLEOTIDE SEQUENCE [LARGE SCALE GENOMIC DNA]</scope>
    <source>
        <strain>ATCC 43067 / DSM 2661 / JAL-1 / JCM 10045 / NBRC 100440</strain>
    </source>
</reference>
<reference key="2">
    <citation type="journal article" date="1997" name="Science">
        <title>Evidence for a family of archaeal ATPases.</title>
        <authorList>
            <person name="Koonin E.V."/>
        </authorList>
    </citation>
    <scope>SIMILARITY</scope>
</reference>
<proteinExistence type="uncertain"/>
<keyword id="KW-1185">Reference proteome</keyword>